<evidence type="ECO:0000250" key="1"/>
<evidence type="ECO:0000250" key="2">
    <source>
        <dbReference type="UniProtKB" id="O43772"/>
    </source>
</evidence>
<evidence type="ECO:0000250" key="3">
    <source>
        <dbReference type="UniProtKB" id="P97521"/>
    </source>
</evidence>
<evidence type="ECO:0000250" key="4">
    <source>
        <dbReference type="UniProtKB" id="Q9Z2Z6"/>
    </source>
</evidence>
<evidence type="ECO:0000255" key="5"/>
<evidence type="ECO:0000305" key="6"/>
<accession>Q8HXY2</accession>
<sequence length="301" mass="32954">MADQPKPISPLKNLLAGGFGGVCLVFVGHPLDTVKVRLQTQPPSLPGQPPMYSGTFDCFRKTLFREGIRGLYRGMAAPIIGVTPMFAVCFFGFGLGKKLQQKHPEDVLSYPQLFAAGMLSGIFTTGIMTPGERIKCLLQIQASSGETKYTGTLDCAKKLYQEFGIRGIYKGTVVTLMRDVPASGMYFMTYEWVKNIFTPEGKRVSELSVPRVLVAGGIAGIFNWAVAIPPDVLKSRFQTAPPGKYPNGFRDVLRELIPDEGVTSLYKGFNAVMIRAFPANAACFLGFEVAMKFLNWATPNL</sequence>
<feature type="initiator methionine" description="Removed" evidence="2">
    <location>
        <position position="1"/>
    </location>
</feature>
<feature type="chain" id="PRO_0000090629" description="Mitochondrial carnitine/acylcarnitine carrier protein">
    <location>
        <begin position="2"/>
        <end position="301"/>
    </location>
</feature>
<feature type="topological domain" description="Cytoplasmic" evidence="5">
    <location>
        <begin position="2"/>
        <end position="12"/>
    </location>
</feature>
<feature type="transmembrane region" description="Helical; Name=1" evidence="5">
    <location>
        <begin position="13"/>
        <end position="31"/>
    </location>
</feature>
<feature type="topological domain" description="Mitochondrial matrix" evidence="5">
    <location>
        <begin position="32"/>
        <end position="73"/>
    </location>
</feature>
<feature type="transmembrane region" description="Helical; Name=2" evidence="5">
    <location>
        <begin position="74"/>
        <end position="93"/>
    </location>
</feature>
<feature type="topological domain" description="Cytoplasmic" evidence="5">
    <location>
        <begin position="94"/>
        <end position="112"/>
    </location>
</feature>
<feature type="transmembrane region" description="Helical; Name=3" evidence="5">
    <location>
        <begin position="113"/>
        <end position="131"/>
    </location>
</feature>
<feature type="topological domain" description="Mitochondrial matrix" evidence="5">
    <location>
        <begin position="132"/>
        <end position="170"/>
    </location>
</feature>
<feature type="transmembrane region" description="Helical; Name=4" evidence="5">
    <location>
        <begin position="171"/>
        <end position="190"/>
    </location>
</feature>
<feature type="topological domain" description="Cytoplasmic" evidence="5">
    <location>
        <begin position="191"/>
        <end position="211"/>
    </location>
</feature>
<feature type="transmembrane region" description="Helical; Name=5" evidence="5">
    <location>
        <begin position="212"/>
        <end position="230"/>
    </location>
</feature>
<feature type="topological domain" description="Mitochondrial matrix" evidence="5">
    <location>
        <begin position="231"/>
        <end position="267"/>
    </location>
</feature>
<feature type="transmembrane region" description="Helical; Name=6" evidence="5">
    <location>
        <begin position="268"/>
        <end position="287"/>
    </location>
</feature>
<feature type="topological domain" description="Cytoplasmic" evidence="5">
    <location>
        <begin position="288"/>
        <end position="301"/>
    </location>
</feature>
<feature type="repeat" description="Solcar 1">
    <location>
        <begin position="8"/>
        <end position="99"/>
    </location>
</feature>
<feature type="repeat" description="Solcar 2">
    <location>
        <begin position="108"/>
        <end position="196"/>
    </location>
</feature>
<feature type="repeat" description="Solcar 3">
    <location>
        <begin position="207"/>
        <end position="293"/>
    </location>
</feature>
<feature type="modified residue" description="N-acetylalanine" evidence="2">
    <location>
        <position position="2"/>
    </location>
</feature>
<feature type="modified residue" description="N6-acetyllysine" evidence="4">
    <location>
        <position position="148"/>
    </location>
</feature>
<feature type="modified residue" description="N6-acetyllysine" evidence="4">
    <location>
        <position position="157"/>
    </location>
</feature>
<feature type="modified residue" description="N6-acetyllysine; alternate" evidence="4">
    <location>
        <position position="170"/>
    </location>
</feature>
<feature type="modified residue" description="N6-succinyllysine; alternate" evidence="4">
    <location>
        <position position="170"/>
    </location>
</feature>
<name>MCAT_MACFA</name>
<protein>
    <recommendedName>
        <fullName evidence="6">Mitochondrial carnitine/acylcarnitine carrier protein</fullName>
    </recommendedName>
    <alternativeName>
        <fullName>Carnitine/acylcarnitine translocase</fullName>
        <shortName>CAC</shortName>
        <shortName>CACT</shortName>
    </alternativeName>
    <alternativeName>
        <fullName>Solute carrier family 25 member 20</fullName>
    </alternativeName>
</protein>
<organism>
    <name type="scientific">Macaca fascicularis</name>
    <name type="common">Crab-eating macaque</name>
    <name type="synonym">Cynomolgus monkey</name>
    <dbReference type="NCBI Taxonomy" id="9541"/>
    <lineage>
        <taxon>Eukaryota</taxon>
        <taxon>Metazoa</taxon>
        <taxon>Chordata</taxon>
        <taxon>Craniata</taxon>
        <taxon>Vertebrata</taxon>
        <taxon>Euteleostomi</taxon>
        <taxon>Mammalia</taxon>
        <taxon>Eutheria</taxon>
        <taxon>Euarchontoglires</taxon>
        <taxon>Primates</taxon>
        <taxon>Haplorrhini</taxon>
        <taxon>Catarrhini</taxon>
        <taxon>Cercopithecidae</taxon>
        <taxon>Cercopithecinae</taxon>
        <taxon>Macaca</taxon>
    </lineage>
</organism>
<dbReference type="EMBL" id="AB083307">
    <property type="protein sequence ID" value="BAC20586.1"/>
    <property type="molecule type" value="mRNA"/>
</dbReference>
<dbReference type="RefSeq" id="NP_001271045.1">
    <property type="nucleotide sequence ID" value="NM_001284116.1"/>
</dbReference>
<dbReference type="SMR" id="Q8HXY2"/>
<dbReference type="STRING" id="9541.ENSMFAP00000036847"/>
<dbReference type="eggNOG" id="KOG0758">
    <property type="taxonomic scope" value="Eukaryota"/>
</dbReference>
<dbReference type="Proteomes" id="UP000233100">
    <property type="component" value="Unplaced"/>
</dbReference>
<dbReference type="GO" id="GO:0005743">
    <property type="term" value="C:mitochondrial inner membrane"/>
    <property type="evidence" value="ECO:0007669"/>
    <property type="project" value="UniProtKB-SubCell"/>
</dbReference>
<dbReference type="GO" id="GO:0015227">
    <property type="term" value="F:O-acyl-L-carnitine transmembrane transporter activity"/>
    <property type="evidence" value="ECO:0000250"/>
    <property type="project" value="UniProtKB"/>
</dbReference>
<dbReference type="GO" id="GO:1902603">
    <property type="term" value="P:carnitine transmembrane transport"/>
    <property type="evidence" value="ECO:0000250"/>
    <property type="project" value="UniProtKB"/>
</dbReference>
<dbReference type="GO" id="GO:0006869">
    <property type="term" value="P:lipid transport"/>
    <property type="evidence" value="ECO:0007669"/>
    <property type="project" value="UniProtKB-KW"/>
</dbReference>
<dbReference type="GO" id="GO:0006839">
    <property type="term" value="P:mitochondrial transport"/>
    <property type="evidence" value="ECO:0007669"/>
    <property type="project" value="TreeGrafter"/>
</dbReference>
<dbReference type="FunFam" id="1.50.40.10:FF:000051">
    <property type="entry name" value="Mitochondrial carnitine/acylcarnitine carrier protein"/>
    <property type="match status" value="1"/>
</dbReference>
<dbReference type="FunFam" id="1.50.40.10:FF:000040">
    <property type="entry name" value="mitochondrial carnitine/acylcarnitine carrier protein"/>
    <property type="match status" value="1"/>
</dbReference>
<dbReference type="Gene3D" id="1.50.40.10">
    <property type="entry name" value="Mitochondrial carrier domain"/>
    <property type="match status" value="2"/>
</dbReference>
<dbReference type="InterPro" id="IPR050567">
    <property type="entry name" value="Mitochondrial_Carrier"/>
</dbReference>
<dbReference type="InterPro" id="IPR018108">
    <property type="entry name" value="Mitochondrial_sb/sol_carrier"/>
</dbReference>
<dbReference type="InterPro" id="IPR023395">
    <property type="entry name" value="Mt_carrier_dom_sf"/>
</dbReference>
<dbReference type="PANTHER" id="PTHR45624">
    <property type="entry name" value="MITOCHONDRIAL BASIC AMINO ACIDS TRANSPORTER-RELATED"/>
    <property type="match status" value="1"/>
</dbReference>
<dbReference type="PANTHER" id="PTHR45624:SF56">
    <property type="entry name" value="MITOCHONDRIAL CARNITINE_ACYLCARNITINE CARRIER PROTEIN"/>
    <property type="match status" value="1"/>
</dbReference>
<dbReference type="Pfam" id="PF00153">
    <property type="entry name" value="Mito_carr"/>
    <property type="match status" value="3"/>
</dbReference>
<dbReference type="SUPFAM" id="SSF103506">
    <property type="entry name" value="Mitochondrial carrier"/>
    <property type="match status" value="1"/>
</dbReference>
<dbReference type="PROSITE" id="PS50920">
    <property type="entry name" value="SOLCAR"/>
    <property type="match status" value="3"/>
</dbReference>
<keyword id="KW-0007">Acetylation</keyword>
<keyword id="KW-0445">Lipid transport</keyword>
<keyword id="KW-0472">Membrane</keyword>
<keyword id="KW-0496">Mitochondrion</keyword>
<keyword id="KW-0999">Mitochondrion inner membrane</keyword>
<keyword id="KW-1185">Reference proteome</keyword>
<keyword id="KW-0677">Repeat</keyword>
<keyword id="KW-0812">Transmembrane</keyword>
<keyword id="KW-1133">Transmembrane helix</keyword>
<keyword id="KW-0813">Transport</keyword>
<gene>
    <name type="primary">SLC25A20</name>
    <name type="synonym">CACT</name>
    <name type="ORF">QccE-14128</name>
</gene>
<reference key="1">
    <citation type="submission" date="2002-04" db="EMBL/GenBank/DDBJ databases">
        <title>Isolation and characterization of cDNA for macaque neurological disease genes.</title>
        <authorList>
            <person name="Kusuda J."/>
            <person name="Osada N."/>
            <person name="Hida M."/>
            <person name="Sugano S."/>
            <person name="Hashimoto K."/>
        </authorList>
    </citation>
    <scope>NUCLEOTIDE SEQUENCE [LARGE SCALE MRNA]</scope>
    <source>
        <tissue>Brain cortex</tissue>
    </source>
</reference>
<comment type="function">
    <text evidence="2">Mediates the electroneutral exchange of acylcarnitines (O-acyl-(R)-carnitine or L-acylcarnitine) of different acyl chain lengths (ranging from O-acetyl-(R)-carnitine to long-chain O-acyl-(R)-carnitines) with free carnitine ((R)-carnitine or L-carnitine) across the mitochondrial inner membrane, via a ping-pong mechanism. Key player in the mitochondrial oxidation pathway, it translocates the fatty acids in the form of acylcarnitines into the mitochondrial matrix, where the carnitine palmitoyltransferase 2 (CPT-2) activates them to undergo fatty acid beta-oxidation. Catalyzes the unidirectional transport (uniport) of carnitine at lower rates than the antiport (exchange).</text>
</comment>
<comment type="catalytic activity">
    <reaction evidence="3">
        <text>O-acetyl-(R)-carnitine(in) + (R)-carnitine(out) = O-acetyl-(R)-carnitine(out) + (R)-carnitine(in)</text>
        <dbReference type="Rhea" id="RHEA:49908"/>
        <dbReference type="ChEBI" id="CHEBI:16347"/>
        <dbReference type="ChEBI" id="CHEBI:57589"/>
    </reaction>
</comment>
<comment type="catalytic activity">
    <reaction evidence="2">
        <text>an O-acyl-(R)-carnitine(in) + (R)-carnitine(out) = an O-acyl-(R)-carnitine(out) + (R)-carnitine(in)</text>
        <dbReference type="Rhea" id="RHEA:49924"/>
        <dbReference type="ChEBI" id="CHEBI:16347"/>
        <dbReference type="ChEBI" id="CHEBI:75659"/>
    </reaction>
</comment>
<comment type="catalytic activity">
    <reaction evidence="3">
        <text>O-propanoyl-(R)-carnitine(in) + (R)-carnitine(out) = O-propanoyl-(R)-carnitine(out) + (R)-carnitine(in)</text>
        <dbReference type="Rhea" id="RHEA:49912"/>
        <dbReference type="ChEBI" id="CHEBI:16347"/>
        <dbReference type="ChEBI" id="CHEBI:53210"/>
    </reaction>
</comment>
<comment type="catalytic activity">
    <reaction evidence="3">
        <text>O-hexadecanoyl-(R)-carnitine(in) + (R)-carnitine(out) = O-hexadecanoyl-(R)-carnitine(out) + (R)-carnitine(in)</text>
        <dbReference type="Rhea" id="RHEA:49916"/>
        <dbReference type="ChEBI" id="CHEBI:16347"/>
        <dbReference type="ChEBI" id="CHEBI:17490"/>
    </reaction>
</comment>
<comment type="catalytic activity">
    <reaction evidence="3">
        <text>O-octanoyl-(R)-carnitine(in) + (R)-carnitine(out) = O-octanoyl-(R)-carnitine(out) + (R)-carnitine(in)</text>
        <dbReference type="Rhea" id="RHEA:49920"/>
        <dbReference type="ChEBI" id="CHEBI:16347"/>
        <dbReference type="ChEBI" id="CHEBI:18102"/>
    </reaction>
</comment>
<comment type="catalytic activity">
    <reaction evidence="2">
        <text>(R)-carnitine(in) = (R)-carnitine(out)</text>
        <dbReference type="Rhea" id="RHEA:34959"/>
        <dbReference type="ChEBI" id="CHEBI:16347"/>
    </reaction>
</comment>
<comment type="subcellular location">
    <subcellularLocation>
        <location evidence="1">Mitochondrion inner membrane</location>
        <topology evidence="1">Multi-pass membrane protein</topology>
    </subcellularLocation>
</comment>
<comment type="similarity">
    <text evidence="6">Belongs to the mitochondrial carrier (TC 2.A.29) family.</text>
</comment>
<proteinExistence type="evidence at transcript level"/>